<dbReference type="EC" id="3.6.1.9" evidence="1"/>
<dbReference type="EMBL" id="CP000103">
    <property type="protein sequence ID" value="ABB73671.1"/>
    <property type="molecule type" value="Genomic_DNA"/>
</dbReference>
<dbReference type="RefSeq" id="WP_011379725.1">
    <property type="nucleotide sequence ID" value="NC_007614.1"/>
</dbReference>
<dbReference type="SMR" id="Q2YC50"/>
<dbReference type="STRING" id="323848.Nmul_A0363"/>
<dbReference type="KEGG" id="nmu:Nmul_A0363"/>
<dbReference type="eggNOG" id="COG0424">
    <property type="taxonomic scope" value="Bacteria"/>
</dbReference>
<dbReference type="HOGENOM" id="CLU_040416_2_1_4"/>
<dbReference type="OrthoDB" id="9807767at2"/>
<dbReference type="Proteomes" id="UP000002718">
    <property type="component" value="Chromosome"/>
</dbReference>
<dbReference type="GO" id="GO:0005737">
    <property type="term" value="C:cytoplasm"/>
    <property type="evidence" value="ECO:0007669"/>
    <property type="project" value="UniProtKB-SubCell"/>
</dbReference>
<dbReference type="GO" id="GO:0036218">
    <property type="term" value="F:dTTP diphosphatase activity"/>
    <property type="evidence" value="ECO:0007669"/>
    <property type="project" value="RHEA"/>
</dbReference>
<dbReference type="GO" id="GO:0036221">
    <property type="term" value="F:UTP diphosphatase activity"/>
    <property type="evidence" value="ECO:0007669"/>
    <property type="project" value="RHEA"/>
</dbReference>
<dbReference type="GO" id="GO:0009117">
    <property type="term" value="P:nucleotide metabolic process"/>
    <property type="evidence" value="ECO:0007669"/>
    <property type="project" value="UniProtKB-KW"/>
</dbReference>
<dbReference type="CDD" id="cd00555">
    <property type="entry name" value="Maf"/>
    <property type="match status" value="1"/>
</dbReference>
<dbReference type="Gene3D" id="3.90.950.10">
    <property type="match status" value="1"/>
</dbReference>
<dbReference type="HAMAP" id="MF_00528">
    <property type="entry name" value="Maf"/>
    <property type="match status" value="1"/>
</dbReference>
<dbReference type="InterPro" id="IPR029001">
    <property type="entry name" value="ITPase-like_fam"/>
</dbReference>
<dbReference type="InterPro" id="IPR003697">
    <property type="entry name" value="Maf-like"/>
</dbReference>
<dbReference type="NCBIfam" id="TIGR00172">
    <property type="entry name" value="maf"/>
    <property type="match status" value="1"/>
</dbReference>
<dbReference type="PANTHER" id="PTHR43213">
    <property type="entry name" value="BIFUNCTIONAL DTTP/UTP PYROPHOSPHATASE/METHYLTRANSFERASE PROTEIN-RELATED"/>
    <property type="match status" value="1"/>
</dbReference>
<dbReference type="PANTHER" id="PTHR43213:SF5">
    <property type="entry name" value="BIFUNCTIONAL DTTP_UTP PYROPHOSPHATASE_METHYLTRANSFERASE PROTEIN-RELATED"/>
    <property type="match status" value="1"/>
</dbReference>
<dbReference type="Pfam" id="PF02545">
    <property type="entry name" value="Maf"/>
    <property type="match status" value="1"/>
</dbReference>
<dbReference type="PIRSF" id="PIRSF006305">
    <property type="entry name" value="Maf"/>
    <property type="match status" value="1"/>
</dbReference>
<dbReference type="SUPFAM" id="SSF52972">
    <property type="entry name" value="ITPase-like"/>
    <property type="match status" value="1"/>
</dbReference>
<proteinExistence type="inferred from homology"/>
<gene>
    <name type="ordered locus">Nmul_A0363</name>
</gene>
<accession>Q2YC50</accession>
<protein>
    <recommendedName>
        <fullName evidence="1">dTTP/UTP pyrophosphatase</fullName>
        <shortName evidence="1">dTTPase/UTPase</shortName>
        <ecNumber evidence="1">3.6.1.9</ecNumber>
    </recommendedName>
    <alternativeName>
        <fullName evidence="1">Nucleoside triphosphate pyrophosphatase</fullName>
    </alternativeName>
    <alternativeName>
        <fullName evidence="1">Nucleotide pyrophosphatase</fullName>
        <shortName evidence="1">Nucleotide PPase</shortName>
    </alternativeName>
</protein>
<reference key="1">
    <citation type="submission" date="2005-08" db="EMBL/GenBank/DDBJ databases">
        <title>Complete sequence of chromosome 1 of Nitrosospira multiformis ATCC 25196.</title>
        <authorList>
            <person name="Copeland A."/>
            <person name="Lucas S."/>
            <person name="Lapidus A."/>
            <person name="Barry K."/>
            <person name="Detter J.C."/>
            <person name="Glavina T."/>
            <person name="Hammon N."/>
            <person name="Israni S."/>
            <person name="Pitluck S."/>
            <person name="Chain P."/>
            <person name="Malfatti S."/>
            <person name="Shin M."/>
            <person name="Vergez L."/>
            <person name="Schmutz J."/>
            <person name="Larimer F."/>
            <person name="Land M."/>
            <person name="Hauser L."/>
            <person name="Kyrpides N."/>
            <person name="Lykidis A."/>
            <person name="Richardson P."/>
        </authorList>
    </citation>
    <scope>NUCLEOTIDE SEQUENCE [LARGE SCALE GENOMIC DNA]</scope>
    <source>
        <strain>ATCC 25196 / NCIMB 11849 / C 71</strain>
    </source>
</reference>
<sequence length="207" mass="22839">MTFVENRIYLASRSPRRQELLKQIGVDFMVLPLREALPRIPDVDETPLPQESPPEYVERIARVKAETGRKRMSERGWADFPVLGADTAVVLNGRIFGKPENPLHAKQMLRALSGQIHEVLTAAAVAAGNGTRVCLSRSSVRFRNLGEQEIDHYLACDEAYDKAGAYAIQGRAAVFISGISGSYSGVVGLPLFETAQLLEESAIRIFQ</sequence>
<keyword id="KW-0963">Cytoplasm</keyword>
<keyword id="KW-0378">Hydrolase</keyword>
<keyword id="KW-0546">Nucleotide metabolism</keyword>
<keyword id="KW-1185">Reference proteome</keyword>
<evidence type="ECO:0000255" key="1">
    <source>
        <dbReference type="HAMAP-Rule" id="MF_00528"/>
    </source>
</evidence>
<feature type="chain" id="PRO_0000267357" description="dTTP/UTP pyrophosphatase">
    <location>
        <begin position="1"/>
        <end position="207"/>
    </location>
</feature>
<feature type="active site" description="Proton acceptor" evidence="1">
    <location>
        <position position="86"/>
    </location>
</feature>
<feature type="site" description="Important for substrate specificity" evidence="1">
    <location>
        <position position="16"/>
    </location>
</feature>
<feature type="site" description="Important for substrate specificity" evidence="1">
    <location>
        <position position="87"/>
    </location>
</feature>
<feature type="site" description="Important for substrate specificity" evidence="1">
    <location>
        <position position="169"/>
    </location>
</feature>
<organism>
    <name type="scientific">Nitrosospira multiformis (strain ATCC 25196 / NCIMB 11849 / C 71)</name>
    <dbReference type="NCBI Taxonomy" id="323848"/>
    <lineage>
        <taxon>Bacteria</taxon>
        <taxon>Pseudomonadati</taxon>
        <taxon>Pseudomonadota</taxon>
        <taxon>Betaproteobacteria</taxon>
        <taxon>Nitrosomonadales</taxon>
        <taxon>Nitrosomonadaceae</taxon>
        <taxon>Nitrosospira</taxon>
    </lineage>
</organism>
<name>NTPPA_NITMU</name>
<comment type="function">
    <text evidence="1">Nucleoside triphosphate pyrophosphatase that hydrolyzes dTTP and UTP. May have a dual role in cell division arrest and in preventing the incorporation of modified nucleotides into cellular nucleic acids.</text>
</comment>
<comment type="catalytic activity">
    <reaction evidence="1">
        <text>dTTP + H2O = dTMP + diphosphate + H(+)</text>
        <dbReference type="Rhea" id="RHEA:28534"/>
        <dbReference type="ChEBI" id="CHEBI:15377"/>
        <dbReference type="ChEBI" id="CHEBI:15378"/>
        <dbReference type="ChEBI" id="CHEBI:33019"/>
        <dbReference type="ChEBI" id="CHEBI:37568"/>
        <dbReference type="ChEBI" id="CHEBI:63528"/>
        <dbReference type="EC" id="3.6.1.9"/>
    </reaction>
</comment>
<comment type="catalytic activity">
    <reaction evidence="1">
        <text>UTP + H2O = UMP + diphosphate + H(+)</text>
        <dbReference type="Rhea" id="RHEA:29395"/>
        <dbReference type="ChEBI" id="CHEBI:15377"/>
        <dbReference type="ChEBI" id="CHEBI:15378"/>
        <dbReference type="ChEBI" id="CHEBI:33019"/>
        <dbReference type="ChEBI" id="CHEBI:46398"/>
        <dbReference type="ChEBI" id="CHEBI:57865"/>
        <dbReference type="EC" id="3.6.1.9"/>
    </reaction>
</comment>
<comment type="cofactor">
    <cofactor evidence="1">
        <name>a divalent metal cation</name>
        <dbReference type="ChEBI" id="CHEBI:60240"/>
    </cofactor>
</comment>
<comment type="subcellular location">
    <subcellularLocation>
        <location evidence="1">Cytoplasm</location>
    </subcellularLocation>
</comment>
<comment type="similarity">
    <text evidence="1">Belongs to the Maf family. YhdE subfamily.</text>
</comment>